<evidence type="ECO:0000255" key="1">
    <source>
        <dbReference type="HAMAP-Rule" id="MF_00149"/>
    </source>
</evidence>
<evidence type="ECO:0000256" key="2">
    <source>
        <dbReference type="SAM" id="MobiDB-lite"/>
    </source>
</evidence>
<reference key="1">
    <citation type="journal article" date="2006" name="Proc. Natl. Acad. Sci. U.S.A.">
        <title>Comparative genomics of the lactic acid bacteria.</title>
        <authorList>
            <person name="Makarova K.S."/>
            <person name="Slesarev A."/>
            <person name="Wolf Y.I."/>
            <person name="Sorokin A."/>
            <person name="Mirkin B."/>
            <person name="Koonin E.V."/>
            <person name="Pavlov A."/>
            <person name="Pavlova N."/>
            <person name="Karamychev V."/>
            <person name="Polouchine N."/>
            <person name="Shakhova V."/>
            <person name="Grigoriev I."/>
            <person name="Lou Y."/>
            <person name="Rohksar D."/>
            <person name="Lucas S."/>
            <person name="Huang K."/>
            <person name="Goodstein D.M."/>
            <person name="Hawkins T."/>
            <person name="Plengvidhya V."/>
            <person name="Welker D."/>
            <person name="Hughes J."/>
            <person name="Goh Y."/>
            <person name="Benson A."/>
            <person name="Baldwin K."/>
            <person name="Lee J.-H."/>
            <person name="Diaz-Muniz I."/>
            <person name="Dosti B."/>
            <person name="Smeianov V."/>
            <person name="Wechter W."/>
            <person name="Barabote R."/>
            <person name="Lorca G."/>
            <person name="Altermann E."/>
            <person name="Barrangou R."/>
            <person name="Ganesan B."/>
            <person name="Xie Y."/>
            <person name="Rawsthorne H."/>
            <person name="Tamir D."/>
            <person name="Parker C."/>
            <person name="Breidt F."/>
            <person name="Broadbent J.R."/>
            <person name="Hutkins R."/>
            <person name="O'Sullivan D."/>
            <person name="Steele J."/>
            <person name="Unlu G."/>
            <person name="Saier M.H. Jr."/>
            <person name="Klaenhammer T."/>
            <person name="Richardson P."/>
            <person name="Kozyavkin S."/>
            <person name="Weimer B.C."/>
            <person name="Mills D.A."/>
        </authorList>
    </citation>
    <scope>NUCLEOTIDE SEQUENCE [LARGE SCALE GENOMIC DNA]</scope>
    <source>
        <strain>ATCC BAA-491 / LMD-9</strain>
    </source>
</reference>
<proteinExistence type="inferred from homology"/>
<feature type="chain" id="PRO_1000010097" description="DNA mismatch repair protein MutL">
    <location>
        <begin position="1"/>
        <end position="647"/>
    </location>
</feature>
<feature type="region of interest" description="Disordered" evidence="2">
    <location>
        <begin position="389"/>
        <end position="423"/>
    </location>
</feature>
<feature type="compositionally biased region" description="Basic and acidic residues" evidence="2">
    <location>
        <begin position="409"/>
        <end position="423"/>
    </location>
</feature>
<comment type="function">
    <text evidence="1">This protein is involved in the repair of mismatches in DNA. It is required for dam-dependent methyl-directed DNA mismatch repair. May act as a 'molecular matchmaker', a protein that promotes the formation of a stable complex between two or more DNA-binding proteins in an ATP-dependent manner without itself being part of a final effector complex.</text>
</comment>
<comment type="similarity">
    <text evidence="1">Belongs to the DNA mismatch repair MutL/HexB family.</text>
</comment>
<organism>
    <name type="scientific">Streptococcus thermophilus (strain ATCC BAA-491 / LMD-9)</name>
    <dbReference type="NCBI Taxonomy" id="322159"/>
    <lineage>
        <taxon>Bacteria</taxon>
        <taxon>Bacillati</taxon>
        <taxon>Bacillota</taxon>
        <taxon>Bacilli</taxon>
        <taxon>Lactobacillales</taxon>
        <taxon>Streptococcaceae</taxon>
        <taxon>Streptococcus</taxon>
    </lineage>
</organism>
<keyword id="KW-0227">DNA damage</keyword>
<keyword id="KW-0234">DNA repair</keyword>
<dbReference type="EMBL" id="CP000419">
    <property type="protein sequence ID" value="ABJ65442.1"/>
    <property type="molecule type" value="Genomic_DNA"/>
</dbReference>
<dbReference type="RefSeq" id="WP_011680601.1">
    <property type="nucleotide sequence ID" value="NZ_CP086001.1"/>
</dbReference>
<dbReference type="SMR" id="Q03MY0"/>
<dbReference type="KEGG" id="ste:STER_0072"/>
<dbReference type="HOGENOM" id="CLU_004131_4_1_9"/>
<dbReference type="GO" id="GO:0032300">
    <property type="term" value="C:mismatch repair complex"/>
    <property type="evidence" value="ECO:0007669"/>
    <property type="project" value="InterPro"/>
</dbReference>
<dbReference type="GO" id="GO:0005524">
    <property type="term" value="F:ATP binding"/>
    <property type="evidence" value="ECO:0007669"/>
    <property type="project" value="InterPro"/>
</dbReference>
<dbReference type="GO" id="GO:0016887">
    <property type="term" value="F:ATP hydrolysis activity"/>
    <property type="evidence" value="ECO:0007669"/>
    <property type="project" value="InterPro"/>
</dbReference>
<dbReference type="GO" id="GO:0140664">
    <property type="term" value="F:ATP-dependent DNA damage sensor activity"/>
    <property type="evidence" value="ECO:0007669"/>
    <property type="project" value="InterPro"/>
</dbReference>
<dbReference type="GO" id="GO:0030983">
    <property type="term" value="F:mismatched DNA binding"/>
    <property type="evidence" value="ECO:0007669"/>
    <property type="project" value="InterPro"/>
</dbReference>
<dbReference type="GO" id="GO:0006298">
    <property type="term" value="P:mismatch repair"/>
    <property type="evidence" value="ECO:0007669"/>
    <property type="project" value="UniProtKB-UniRule"/>
</dbReference>
<dbReference type="CDD" id="cd16926">
    <property type="entry name" value="HATPase_MutL-MLH-PMS-like"/>
    <property type="match status" value="1"/>
</dbReference>
<dbReference type="CDD" id="cd00782">
    <property type="entry name" value="MutL_Trans"/>
    <property type="match status" value="1"/>
</dbReference>
<dbReference type="FunFam" id="3.30.1370.100:FF:000004">
    <property type="entry name" value="DNA mismatch repair endonuclease MutL"/>
    <property type="match status" value="1"/>
</dbReference>
<dbReference type="FunFam" id="3.30.565.10:FF:000003">
    <property type="entry name" value="DNA mismatch repair endonuclease MutL"/>
    <property type="match status" value="1"/>
</dbReference>
<dbReference type="Gene3D" id="3.30.230.10">
    <property type="match status" value="1"/>
</dbReference>
<dbReference type="Gene3D" id="3.30.565.10">
    <property type="entry name" value="Histidine kinase-like ATPase, C-terminal domain"/>
    <property type="match status" value="1"/>
</dbReference>
<dbReference type="Gene3D" id="3.30.1540.20">
    <property type="entry name" value="MutL, C-terminal domain, dimerisation subdomain"/>
    <property type="match status" value="1"/>
</dbReference>
<dbReference type="Gene3D" id="3.30.1370.100">
    <property type="entry name" value="MutL, C-terminal domain, regulatory subdomain"/>
    <property type="match status" value="1"/>
</dbReference>
<dbReference type="HAMAP" id="MF_00149">
    <property type="entry name" value="DNA_mis_repair"/>
    <property type="match status" value="1"/>
</dbReference>
<dbReference type="InterPro" id="IPR014762">
    <property type="entry name" value="DNA_mismatch_repair_CS"/>
</dbReference>
<dbReference type="InterPro" id="IPR020667">
    <property type="entry name" value="DNA_mismatch_repair_MutL"/>
</dbReference>
<dbReference type="InterPro" id="IPR013507">
    <property type="entry name" value="DNA_mismatch_S5_2-like"/>
</dbReference>
<dbReference type="InterPro" id="IPR036890">
    <property type="entry name" value="HATPase_C_sf"/>
</dbReference>
<dbReference type="InterPro" id="IPR002099">
    <property type="entry name" value="MutL/Mlh/PMS"/>
</dbReference>
<dbReference type="InterPro" id="IPR038973">
    <property type="entry name" value="MutL/Mlh/Pms-like"/>
</dbReference>
<dbReference type="InterPro" id="IPR014790">
    <property type="entry name" value="MutL_C"/>
</dbReference>
<dbReference type="InterPro" id="IPR042120">
    <property type="entry name" value="MutL_C_dimsub"/>
</dbReference>
<dbReference type="InterPro" id="IPR042121">
    <property type="entry name" value="MutL_C_regsub"/>
</dbReference>
<dbReference type="InterPro" id="IPR037198">
    <property type="entry name" value="MutL_C_sf"/>
</dbReference>
<dbReference type="InterPro" id="IPR020568">
    <property type="entry name" value="Ribosomal_Su5_D2-typ_SF"/>
</dbReference>
<dbReference type="InterPro" id="IPR014721">
    <property type="entry name" value="Ribsml_uS5_D2-typ_fold_subgr"/>
</dbReference>
<dbReference type="NCBIfam" id="TIGR00585">
    <property type="entry name" value="mutl"/>
    <property type="match status" value="1"/>
</dbReference>
<dbReference type="NCBIfam" id="NF000950">
    <property type="entry name" value="PRK00095.1-3"/>
    <property type="match status" value="1"/>
</dbReference>
<dbReference type="PANTHER" id="PTHR10073">
    <property type="entry name" value="DNA MISMATCH REPAIR PROTEIN MLH, PMS, MUTL"/>
    <property type="match status" value="1"/>
</dbReference>
<dbReference type="PANTHER" id="PTHR10073:SF12">
    <property type="entry name" value="DNA MISMATCH REPAIR PROTEIN MLH1"/>
    <property type="match status" value="1"/>
</dbReference>
<dbReference type="Pfam" id="PF01119">
    <property type="entry name" value="DNA_mis_repair"/>
    <property type="match status" value="1"/>
</dbReference>
<dbReference type="Pfam" id="PF13589">
    <property type="entry name" value="HATPase_c_3"/>
    <property type="match status" value="1"/>
</dbReference>
<dbReference type="Pfam" id="PF08676">
    <property type="entry name" value="MutL_C"/>
    <property type="match status" value="1"/>
</dbReference>
<dbReference type="SMART" id="SM01340">
    <property type="entry name" value="DNA_mis_repair"/>
    <property type="match status" value="1"/>
</dbReference>
<dbReference type="SMART" id="SM00853">
    <property type="entry name" value="MutL_C"/>
    <property type="match status" value="1"/>
</dbReference>
<dbReference type="SUPFAM" id="SSF55874">
    <property type="entry name" value="ATPase domain of HSP90 chaperone/DNA topoisomerase II/histidine kinase"/>
    <property type="match status" value="1"/>
</dbReference>
<dbReference type="SUPFAM" id="SSF118116">
    <property type="entry name" value="DNA mismatch repair protein MutL"/>
    <property type="match status" value="1"/>
</dbReference>
<dbReference type="SUPFAM" id="SSF54211">
    <property type="entry name" value="Ribosomal protein S5 domain 2-like"/>
    <property type="match status" value="1"/>
</dbReference>
<dbReference type="PROSITE" id="PS00058">
    <property type="entry name" value="DNA_MISMATCH_REPAIR_1"/>
    <property type="match status" value="1"/>
</dbReference>
<name>MUTL_STRTD</name>
<protein>
    <recommendedName>
        <fullName evidence="1">DNA mismatch repair protein MutL</fullName>
    </recommendedName>
</protein>
<gene>
    <name evidence="1" type="primary">mutL</name>
    <name type="ordered locus">STER_0072</name>
</gene>
<accession>Q03MY0</accession>
<sequence>MPKIIELPEVLANQIAAGEVVERPASVVKELVENAIDAGSTQITIEVEESGLSKIQITDNGEGMAQADVAMSLRRHATSKIKNQGDLFRIRTLGFRGEALPSIASISHLTIVTAADGEVYGTKLVAKGGEIESQDPISTPVGTKITVENLFYNTPARLKYMKSLQAELAHIVDVVNRLSLAHPEVAFTLLNDGRQLTQTSGTGDLRQAIAGIYGLTTAKKMVEISNSDLDFEVSGYVSLPELTRANRNYITILINGRYIKNFLLNRAIFDGYGSKLMVGRFPIAVIDIQIDPYLADVNVHPTKQEVRISKEKELMALIKSAIAQSLREQDLIPDALENLAKSSTRGATRSVQTSLPLKQTNLYYDSSRNDFFVTPETVQEDIKPLVSKSESSVSSVANKQQPTVKQAKRSADDSDSEHGKLDYKNKSKLKRMLENLTNEETSTFPELEFFGQMHGTYLFAQGQGGLYIIDQHAAQERVKYEYYREKIGVVDSSLQQLLVPYLFEFSGSDYISLQEKMPLLNQVCIYLEPYGNNTFILREHPIWMKEEEIESAVYEMCDMLLLTNEVSVKTYRAELAIMMSCKRSIKANHALDDYSARDLLVQLAQCKNPYNCPHGRPVLVNFTKSDMEKMFRRIQENHTSLRDLGKY</sequence>